<accession>Q6NPR6</accession>
<accession>Q8VYW3</accession>
<accession>Q9FJI8</accession>
<comment type="sequence caution" evidence="5">
    <conflict type="erroneous gene model prediction">
        <sequence resource="EMBL-CDS" id="BAB11508"/>
    </conflict>
</comment>
<sequence>MATKNSKQNMSVLLTKLGDRDTFTMAARELDLMARQIDPSSSSGNLQSFISVILSVDTGDKPAVRKHCIHLLAVLSVSLPLNSLSPFLSKILTRITRRLRDPDSSIRSTCVAAVSAISSRTTKPPFYSAFMKPLADTLFTEQEVNAQIGAALCLAAAIDSASDPDPVRLGQTLLPRLEKLVKCNAFKAKSAGVVVIGSVIGAGGLSGTSVSSGGLKGLVDCLLSFLVSEDWAARKAAAEALGRLATMERNELGEFKAKCLKIFESRKYDKVKAVREVMNQMMEAWKQVPDLSEEVSPPRSNASSKGDASDGRYPSGSRVGSTPAKSRTHLVNRSTPPGSSLATTARKQANRKSIDQKKTSLTASLTKPNVRRRLEWKAGGASIPTGVSLEDEQHCDHDENAKETSHSSHNTVQKLGGVSSSLNGNIPPSGATMVTGHHVLSENPNSNNCKGLEDISLIRNQLVQIEQQQANLMDLLQRFVGSSQHGMRGLETRVHGLELALDEISYDLAVSNGRMSNGSSRNNCCLLPSGSFIKSKFWKKHDSKYSASRMSTYRNRNAETTEIQNSRHRFNGSPGFIVNPLAEIRPDNDLQVCLTIEGRRETKPSKASETLKTTV</sequence>
<gene>
    <name evidence="4" type="primary">TOR1L3</name>
    <name evidence="6" type="ordered locus">At5g62580</name>
    <name evidence="8" type="ORF">K19B1.19</name>
</gene>
<evidence type="ECO:0000250" key="1">
    <source>
        <dbReference type="UniProtKB" id="Q9XIE4"/>
    </source>
</evidence>
<evidence type="ECO:0000255" key="2"/>
<evidence type="ECO:0000256" key="3">
    <source>
        <dbReference type="SAM" id="MobiDB-lite"/>
    </source>
</evidence>
<evidence type="ECO:0000303" key="4">
    <source>
    </source>
</evidence>
<evidence type="ECO:0000305" key="5"/>
<evidence type="ECO:0000312" key="6">
    <source>
        <dbReference type="Araport" id="AT5G62580"/>
    </source>
</evidence>
<evidence type="ECO:0000312" key="7">
    <source>
        <dbReference type="EMBL" id="AAR23722.1"/>
    </source>
</evidence>
<evidence type="ECO:0000312" key="8">
    <source>
        <dbReference type="EMBL" id="BAB11508.1"/>
    </source>
</evidence>
<keyword id="KW-0597">Phosphoprotein</keyword>
<keyword id="KW-1185">Reference proteome</keyword>
<keyword id="KW-0677">Repeat</keyword>
<reference key="1">
    <citation type="journal article" date="1998" name="DNA Res.">
        <title>Structural analysis of Arabidopsis thaliana chromosome 5. VII. Sequence features of the regions of 1,013,767 bp covered by sixteen physically assigned P1 and TAC clones.</title>
        <authorList>
            <person name="Nakamura Y."/>
            <person name="Sato S."/>
            <person name="Asamizu E."/>
            <person name="Kaneko T."/>
            <person name="Kotani H."/>
            <person name="Miyajima N."/>
            <person name="Tabata S."/>
        </authorList>
    </citation>
    <scope>NUCLEOTIDE SEQUENCE [LARGE SCALE GENOMIC DNA]</scope>
</reference>
<reference key="2">
    <citation type="journal article" date="2017" name="Plant J.">
        <title>Araport11: a complete reannotation of the Arabidopsis thaliana reference genome.</title>
        <authorList>
            <person name="Cheng C.Y."/>
            <person name="Krishnakumar V."/>
            <person name="Chan A.P."/>
            <person name="Thibaud-Nissen F."/>
            <person name="Schobel S."/>
            <person name="Town C.D."/>
        </authorList>
    </citation>
    <scope>GENOME REANNOTATION</scope>
    <source>
        <strain>cv. Columbia</strain>
    </source>
</reference>
<reference key="3">
    <citation type="journal article" date="2003" name="Science">
        <title>Empirical analysis of transcriptional activity in the Arabidopsis genome.</title>
        <authorList>
            <person name="Yamada K."/>
            <person name="Lim J."/>
            <person name="Dale J.M."/>
            <person name="Chen H."/>
            <person name="Shinn P."/>
            <person name="Palm C.J."/>
            <person name="Southwick A.M."/>
            <person name="Wu H.C."/>
            <person name="Kim C.J."/>
            <person name="Nguyen M."/>
            <person name="Pham P.K."/>
            <person name="Cheuk R.F."/>
            <person name="Karlin-Newmann G."/>
            <person name="Liu S.X."/>
            <person name="Lam B."/>
            <person name="Sakano H."/>
            <person name="Wu T."/>
            <person name="Yu G."/>
            <person name="Miranda M."/>
            <person name="Quach H.L."/>
            <person name="Tripp M."/>
            <person name="Chang C.H."/>
            <person name="Lee J.M."/>
            <person name="Toriumi M.J."/>
            <person name="Chan M.M."/>
            <person name="Tang C.C."/>
            <person name="Onodera C.S."/>
            <person name="Deng J.M."/>
            <person name="Akiyama K."/>
            <person name="Ansari Y."/>
            <person name="Arakawa T."/>
            <person name="Banh J."/>
            <person name="Banno F."/>
            <person name="Bowser L."/>
            <person name="Brooks S.Y."/>
            <person name="Carninci P."/>
            <person name="Chao Q."/>
            <person name="Choy N."/>
            <person name="Enju A."/>
            <person name="Goldsmith A.D."/>
            <person name="Gurjal M."/>
            <person name="Hansen N.F."/>
            <person name="Hayashizaki Y."/>
            <person name="Johnson-Hopson C."/>
            <person name="Hsuan V.W."/>
            <person name="Iida K."/>
            <person name="Karnes M."/>
            <person name="Khan S."/>
            <person name="Koesema E."/>
            <person name="Ishida J."/>
            <person name="Jiang P.X."/>
            <person name="Jones T."/>
            <person name="Kawai J."/>
            <person name="Kamiya A."/>
            <person name="Meyers C."/>
            <person name="Nakajima M."/>
            <person name="Narusaka M."/>
            <person name="Seki M."/>
            <person name="Sakurai T."/>
            <person name="Satou M."/>
            <person name="Tamse R."/>
            <person name="Vaysberg M."/>
            <person name="Wallender E.K."/>
            <person name="Wong C."/>
            <person name="Yamamura Y."/>
            <person name="Yuan S."/>
            <person name="Shinozaki K."/>
            <person name="Davis R.W."/>
            <person name="Theologis A."/>
            <person name="Ecker J.R."/>
        </authorList>
    </citation>
    <scope>NUCLEOTIDE SEQUENCE [LARGE SCALE MRNA]</scope>
    <source>
        <strain>cv. Columbia</strain>
    </source>
</reference>
<reference key="4">
    <citation type="journal article" date="2004" name="Curr. Biol.">
        <title>Helical growth of the Arabidopsis mutant tortifolia1 reveals a plant-specific microtubule-associated protein.</title>
        <authorList>
            <person name="Buschmann H."/>
            <person name="Fabri C.O."/>
            <person name="Hauptmann M."/>
            <person name="Hutzler P."/>
            <person name="Laux T."/>
            <person name="Lloyd C.W."/>
            <person name="Schaeffner A.R."/>
        </authorList>
    </citation>
    <scope>GENE FAMILY</scope>
</reference>
<reference key="5">
    <citation type="journal article" date="2004" name="Plant Physiol.">
        <title>Plant-specific microtubule-associated protein SPIRAL2 is required for anisotropic growth in Arabidopsis.</title>
        <authorList>
            <person name="Shoji T."/>
            <person name="Narita N.N."/>
            <person name="Hayashi K."/>
            <person name="Asada J."/>
            <person name="Hamada T."/>
            <person name="Sonobe S."/>
            <person name="Nakajima K."/>
            <person name="Hashimoto T."/>
        </authorList>
    </citation>
    <scope>GENE FAMILY</scope>
</reference>
<organism evidence="7">
    <name type="scientific">Arabidopsis thaliana</name>
    <name type="common">Mouse-ear cress</name>
    <dbReference type="NCBI Taxonomy" id="3702"/>
    <lineage>
        <taxon>Eukaryota</taxon>
        <taxon>Viridiplantae</taxon>
        <taxon>Streptophyta</taxon>
        <taxon>Embryophyta</taxon>
        <taxon>Tracheophyta</taxon>
        <taxon>Spermatophyta</taxon>
        <taxon>Magnoliopsida</taxon>
        <taxon>eudicotyledons</taxon>
        <taxon>Gunneridae</taxon>
        <taxon>Pentapetalae</taxon>
        <taxon>rosids</taxon>
        <taxon>malvids</taxon>
        <taxon>Brassicales</taxon>
        <taxon>Brassicaceae</taxon>
        <taxon>Camelineae</taxon>
        <taxon>Arabidopsis</taxon>
    </lineage>
</organism>
<name>TORL3_ARATH</name>
<protein>
    <recommendedName>
        <fullName evidence="4">TORTIFOLIA1-like protein 3</fullName>
    </recommendedName>
</protein>
<proteinExistence type="evidence at transcript level"/>
<feature type="chain" id="PRO_0000438406" description="TORTIFOLIA1-like protein 3">
    <location>
        <begin position="1"/>
        <end position="615"/>
    </location>
</feature>
<feature type="repeat" description="HEAT 1" evidence="2">
    <location>
        <begin position="44"/>
        <end position="81"/>
    </location>
</feature>
<feature type="repeat" description="HEAT 2" evidence="2">
    <location>
        <begin position="86"/>
        <end position="123"/>
    </location>
</feature>
<feature type="repeat" description="HEAT 3" evidence="2">
    <location>
        <begin position="125"/>
        <end position="163"/>
    </location>
</feature>
<feature type="repeat" description="HEAT 4" evidence="2">
    <location>
        <begin position="168"/>
        <end position="205"/>
    </location>
</feature>
<feature type="repeat" description="HEAT 5" evidence="2">
    <location>
        <begin position="213"/>
        <end position="250"/>
    </location>
</feature>
<feature type="region of interest" description="Disordered" evidence="3">
    <location>
        <begin position="288"/>
        <end position="446"/>
    </location>
</feature>
<feature type="compositionally biased region" description="Polar residues" evidence="3">
    <location>
        <begin position="318"/>
        <end position="347"/>
    </location>
</feature>
<feature type="compositionally biased region" description="Basic and acidic residues" evidence="3">
    <location>
        <begin position="391"/>
        <end position="406"/>
    </location>
</feature>
<feature type="compositionally biased region" description="Polar residues" evidence="3">
    <location>
        <begin position="407"/>
        <end position="426"/>
    </location>
</feature>
<feature type="modified residue" description="Phosphoserine" evidence="1">
    <location>
        <position position="456"/>
    </location>
</feature>
<feature type="sequence conflict" description="In Ref. 3; AAL47433." evidence="5" ref="3">
    <original>M</original>
    <variation>T</variation>
    <location>
        <position position="10"/>
    </location>
</feature>
<dbReference type="EMBL" id="AB015469">
    <property type="protein sequence ID" value="BAB11508.1"/>
    <property type="status" value="ALT_SEQ"/>
    <property type="molecule type" value="Genomic_DNA"/>
</dbReference>
<dbReference type="EMBL" id="CP002688">
    <property type="protein sequence ID" value="AED97628.1"/>
    <property type="molecule type" value="Genomic_DNA"/>
</dbReference>
<dbReference type="EMBL" id="CP002688">
    <property type="protein sequence ID" value="ANM70553.1"/>
    <property type="molecule type" value="Genomic_DNA"/>
</dbReference>
<dbReference type="EMBL" id="AY069877">
    <property type="protein sequence ID" value="AAL47433.1"/>
    <property type="molecule type" value="mRNA"/>
</dbReference>
<dbReference type="EMBL" id="BT010752">
    <property type="protein sequence ID" value="AAR23722.1"/>
    <property type="molecule type" value="mRNA"/>
</dbReference>
<dbReference type="RefSeq" id="NP_001318866.1">
    <property type="nucleotide sequence ID" value="NM_001345554.1"/>
</dbReference>
<dbReference type="RefSeq" id="NP_201064.2">
    <property type="nucleotide sequence ID" value="NM_125653.4"/>
</dbReference>
<dbReference type="SMR" id="Q6NPR6"/>
<dbReference type="FunCoup" id="Q6NPR6">
    <property type="interactions" value="1353"/>
</dbReference>
<dbReference type="STRING" id="3702.Q6NPR6"/>
<dbReference type="GlyGen" id="Q6NPR6">
    <property type="glycosylation" value="1 site"/>
</dbReference>
<dbReference type="iPTMnet" id="Q6NPR6"/>
<dbReference type="PaxDb" id="3702-AT5G62580.1"/>
<dbReference type="ProteomicsDB" id="245204"/>
<dbReference type="EnsemblPlants" id="AT5G62580.1">
    <property type="protein sequence ID" value="AT5G62580.1"/>
    <property type="gene ID" value="AT5G62580"/>
</dbReference>
<dbReference type="EnsemblPlants" id="AT5G62580.2">
    <property type="protein sequence ID" value="AT5G62580.2"/>
    <property type="gene ID" value="AT5G62580"/>
</dbReference>
<dbReference type="GeneID" id="836379"/>
<dbReference type="Gramene" id="AT5G62580.1">
    <property type="protein sequence ID" value="AT5G62580.1"/>
    <property type="gene ID" value="AT5G62580"/>
</dbReference>
<dbReference type="Gramene" id="AT5G62580.2">
    <property type="protein sequence ID" value="AT5G62580.2"/>
    <property type="gene ID" value="AT5G62580"/>
</dbReference>
<dbReference type="KEGG" id="ath:AT5G62580"/>
<dbReference type="Araport" id="AT5G62580"/>
<dbReference type="TAIR" id="AT5G62580"/>
<dbReference type="eggNOG" id="ENOG502QQTY">
    <property type="taxonomic scope" value="Eukaryota"/>
</dbReference>
<dbReference type="HOGENOM" id="CLU_025475_0_0_1"/>
<dbReference type="InParanoid" id="Q6NPR6"/>
<dbReference type="OMA" id="NNCCLLP"/>
<dbReference type="OrthoDB" id="1904066at2759"/>
<dbReference type="PhylomeDB" id="Q6NPR6"/>
<dbReference type="PRO" id="PR:Q6NPR6"/>
<dbReference type="Proteomes" id="UP000006548">
    <property type="component" value="Chromosome 5"/>
</dbReference>
<dbReference type="ExpressionAtlas" id="Q6NPR6">
    <property type="expression patterns" value="baseline and differential"/>
</dbReference>
<dbReference type="GO" id="GO:0005874">
    <property type="term" value="C:microtubule"/>
    <property type="evidence" value="ECO:0007669"/>
    <property type="project" value="InterPro"/>
</dbReference>
<dbReference type="GO" id="GO:0008017">
    <property type="term" value="F:microtubule binding"/>
    <property type="evidence" value="ECO:0007669"/>
    <property type="project" value="InterPro"/>
</dbReference>
<dbReference type="FunFam" id="1.25.10.10:FF:001652">
    <property type="entry name" value="TORTIFOLIA1-like protein 3"/>
    <property type="match status" value="1"/>
</dbReference>
<dbReference type="Gene3D" id="1.25.10.10">
    <property type="entry name" value="Leucine-rich Repeat Variant"/>
    <property type="match status" value="1"/>
</dbReference>
<dbReference type="InterPro" id="IPR011989">
    <property type="entry name" value="ARM-like"/>
</dbReference>
<dbReference type="InterPro" id="IPR016024">
    <property type="entry name" value="ARM-type_fold"/>
</dbReference>
<dbReference type="InterPro" id="IPR033337">
    <property type="entry name" value="TORTIFOLIA1/SINE1-2"/>
</dbReference>
<dbReference type="PANTHER" id="PTHR31355">
    <property type="entry name" value="MICROTUBULE-ASSOCIATED PROTEIN TORTIFOLIA1"/>
    <property type="match status" value="1"/>
</dbReference>
<dbReference type="PANTHER" id="PTHR31355:SF8">
    <property type="entry name" value="TORTIFOLIA1-LIKE PROTEIN 3"/>
    <property type="match status" value="1"/>
</dbReference>
<dbReference type="Pfam" id="PF24714">
    <property type="entry name" value="TOR1L1_N"/>
    <property type="match status" value="1"/>
</dbReference>
<dbReference type="SUPFAM" id="SSF48371">
    <property type="entry name" value="ARM repeat"/>
    <property type="match status" value="1"/>
</dbReference>